<name>IRC6_VANPO</name>
<gene>
    <name type="primary">IRC6</name>
    <name type="ORF">Kpol_460p10</name>
</gene>
<accession>A7TQS6</accession>
<comment type="function">
    <text evidence="1">Involved in gross chromosomal rearrangements (GCRs) and telomere healing.</text>
</comment>
<comment type="similarity">
    <text evidence="2">Belongs to the IRC6 family.</text>
</comment>
<evidence type="ECO:0000250" key="1"/>
<evidence type="ECO:0000305" key="2"/>
<organism>
    <name type="scientific">Vanderwaltozyma polyspora (strain ATCC 22028 / DSM 70294 / BCRC 21397 / CBS 2163 / NBRC 10782 / NRRL Y-8283 / UCD 57-17)</name>
    <name type="common">Kluyveromyces polysporus</name>
    <dbReference type="NCBI Taxonomy" id="436907"/>
    <lineage>
        <taxon>Eukaryota</taxon>
        <taxon>Fungi</taxon>
        <taxon>Dikarya</taxon>
        <taxon>Ascomycota</taxon>
        <taxon>Saccharomycotina</taxon>
        <taxon>Saccharomycetes</taxon>
        <taxon>Saccharomycetales</taxon>
        <taxon>Saccharomycetaceae</taxon>
        <taxon>Vanderwaltozyma</taxon>
    </lineage>
</organism>
<proteinExistence type="inferred from homology"/>
<reference key="1">
    <citation type="journal article" date="2007" name="Proc. Natl. Acad. Sci. U.S.A.">
        <title>Independent sorting-out of thousands of duplicated gene pairs in two yeast species descended from a whole-genome duplication.</title>
        <authorList>
            <person name="Scannell D.R."/>
            <person name="Frank A.C."/>
            <person name="Conant G.C."/>
            <person name="Byrne K.P."/>
            <person name="Woolfit M."/>
            <person name="Wolfe K.H."/>
        </authorList>
    </citation>
    <scope>NUCLEOTIDE SEQUENCE [LARGE SCALE GENOMIC DNA]</scope>
    <source>
        <strain>ATCC 22028 / DSM 70294 / BCRC 21397 / CBS 2163 / NBRC 10782 / NRRL Y-8283 / UCD 57-17</strain>
    </source>
</reference>
<protein>
    <recommendedName>
        <fullName>Increased recombination centers protein 6</fullName>
    </recommendedName>
</protein>
<keyword id="KW-0160">Chromosomal rearrangement</keyword>
<keyword id="KW-1185">Reference proteome</keyword>
<sequence>MNEDGSVCNKILIAFQDNDQIANLKESVLGEVFRLDKANTNHDENIIKGLTWSTKYYEVRYDLYVDTFDDFEEWCKDLISSEYDDLREVLSGIIVIDSYTMEKDKIDQNKLLGQLGSVLQDKFFVFMNTNKDISQDVIDELNDDNSMQLTSDSGNSVEIINYHNVSNLKLNQYNEKIGFERVREIIDTCEWSGGHRVQTVEAKADSTDVDLESVFNRLKEARLKYLEIEDEDEREQFALEISNEFAEFLQ</sequence>
<feature type="chain" id="PRO_0000399225" description="Increased recombination centers protein 6">
    <location>
        <begin position="1"/>
        <end position="250"/>
    </location>
</feature>
<dbReference type="EMBL" id="DS480463">
    <property type="protein sequence ID" value="EDO15375.1"/>
    <property type="molecule type" value="Genomic_DNA"/>
</dbReference>
<dbReference type="RefSeq" id="XP_001643233.1">
    <property type="nucleotide sequence ID" value="XM_001643183.1"/>
</dbReference>
<dbReference type="SMR" id="A7TQS6"/>
<dbReference type="FunCoup" id="A7TQS6">
    <property type="interactions" value="30"/>
</dbReference>
<dbReference type="STRING" id="436907.A7TQS6"/>
<dbReference type="GeneID" id="5543446"/>
<dbReference type="KEGG" id="vpo:Kpol_460p10"/>
<dbReference type="eggNOG" id="ENOG502S7AE">
    <property type="taxonomic scope" value="Eukaryota"/>
</dbReference>
<dbReference type="HOGENOM" id="CLU_079666_0_0_1"/>
<dbReference type="InParanoid" id="A7TQS6"/>
<dbReference type="OMA" id="GMESACT"/>
<dbReference type="OrthoDB" id="10261384at2759"/>
<dbReference type="PhylomeDB" id="A7TQS6"/>
<dbReference type="Proteomes" id="UP000000267">
    <property type="component" value="Unassembled WGS sequence"/>
</dbReference>
<dbReference type="GO" id="GO:0030674">
    <property type="term" value="F:protein-macromolecule adaptor activity"/>
    <property type="evidence" value="ECO:0007669"/>
    <property type="project" value="TreeGrafter"/>
</dbReference>
<dbReference type="GO" id="GO:0016192">
    <property type="term" value="P:vesicle-mediated transport"/>
    <property type="evidence" value="ECO:0007669"/>
    <property type="project" value="InterPro"/>
</dbReference>
<dbReference type="Gene3D" id="3.40.50.11960">
    <property type="match status" value="1"/>
</dbReference>
<dbReference type="InterPro" id="IPR034627">
    <property type="entry name" value="Irc6"/>
</dbReference>
<dbReference type="PANTHER" id="PTHR28043">
    <property type="entry name" value="INCREASED RECOMBINATION CENTERS PROTEIN 6"/>
    <property type="match status" value="1"/>
</dbReference>
<dbReference type="PANTHER" id="PTHR28043:SF1">
    <property type="entry name" value="INCREASED RECOMBINATION CENTERS PROTEIN 6"/>
    <property type="match status" value="1"/>
</dbReference>
<dbReference type="Pfam" id="PF10199">
    <property type="entry name" value="Adaptin_binding"/>
    <property type="match status" value="1"/>
</dbReference>